<gene>
    <name type="primary">OlyA6</name>
</gene>
<dbReference type="EMBL" id="KC012711">
    <property type="protein sequence ID" value="AGH25589.1"/>
    <property type="molecule type" value="mRNA"/>
</dbReference>
<dbReference type="PDB" id="6MYI">
    <property type="method" value="X-ray"/>
    <property type="resolution" value="1.15 A"/>
    <property type="chains" value="A/B/C/D=1-138"/>
</dbReference>
<dbReference type="PDB" id="6MYJ">
    <property type="method" value="X-ray"/>
    <property type="resolution" value="1.33 A"/>
    <property type="chains" value="A/B/C/D=1-138"/>
</dbReference>
<dbReference type="PDB" id="6MYK">
    <property type="method" value="X-ray"/>
    <property type="resolution" value="1.80 A"/>
    <property type="chains" value="A/B/C/D=1-138"/>
</dbReference>
<dbReference type="PDBsum" id="6MYI"/>
<dbReference type="PDBsum" id="6MYJ"/>
<dbReference type="PDBsum" id="6MYK"/>
<dbReference type="SMR" id="P83467"/>
<dbReference type="TCDB" id="1.C.119.1.2">
    <property type="family name" value="the aegerolysin (aegerolysin) family"/>
</dbReference>
<dbReference type="TCDB" id="1.C.97.3.2">
    <property type="family name" value="the pleurotolysin pore-forming (pleurotolysin) family"/>
</dbReference>
<dbReference type="VEuPathDB" id="FungiDB:PC9H_010774"/>
<dbReference type="VEuPathDB" id="FungiDB:PLEOSDRAFT_1090164"/>
<dbReference type="GO" id="GO:0019836">
    <property type="term" value="P:symbiont-mediated hemolysis of host erythrocyte"/>
    <property type="evidence" value="ECO:0007669"/>
    <property type="project" value="InterPro"/>
</dbReference>
<dbReference type="Gene3D" id="2.60.270.50">
    <property type="match status" value="1"/>
</dbReference>
<dbReference type="InterPro" id="IPR009413">
    <property type="entry name" value="Aegerolysin-typ"/>
</dbReference>
<dbReference type="Pfam" id="PF06355">
    <property type="entry name" value="Aegerolysin"/>
    <property type="match status" value="1"/>
</dbReference>
<dbReference type="PIRSF" id="PIRSF007951">
    <property type="entry name" value="Hemolysin, aegerolysin type"/>
    <property type="match status" value="1"/>
</dbReference>
<name>OLYA6_PLEOS</name>
<proteinExistence type="evidence at protein level"/>
<accession>P83467</accession>
<accession>M4QNV2</accession>
<keyword id="KW-0002">3D-structure</keyword>
<keyword id="KW-0204">Cytolysis</keyword>
<keyword id="KW-0903">Direct protein sequencing</keyword>
<keyword id="KW-0354">Hemolysis</keyword>
<sequence>MAYAQWVIIIIHNVGSQDVKIKNLKASWGKLHADGDKDAEVSASNYEGKIVKPDEKLQINACGRSDAAEGTTGTFDLVDPADGDKQVRHFYWDCPWGSKTNTWTVSGSNTKWMIEYSGQNLDSGALGTITVDTLKKGN</sequence>
<comment type="function">
    <text evidence="1 2">Has hemolytic activity against bovine erythrocytes at nanomolar concentrations in vitro. Promotes active pleurotolysin B (PlyB)-dependent permeabilization of membranes rich in cholesterol and sphingomyelin. May play an important role in the initial phase of fungal fruiting.</text>
</comment>
<comment type="subunit">
    <text evidence="1">Monomer.</text>
</comment>
<comment type="developmental stage">
    <text evidence="1">Expression begins during formation of the primordia, increases remarkably as the fruiting bodies develop and declines as they mature.</text>
</comment>
<comment type="similarity">
    <text evidence="3">Belongs to the aegerolysin family.</text>
</comment>
<feature type="initiator methionine" description="Removed" evidence="1">
    <location>
        <position position="1"/>
    </location>
</feature>
<feature type="chain" id="PRO_0000156988" description="Ostreolysin A6">
    <location>
        <begin position="2"/>
        <end position="138"/>
    </location>
</feature>
<feature type="strand" evidence="4">
    <location>
        <begin position="6"/>
        <end position="13"/>
    </location>
</feature>
<feature type="strand" evidence="4">
    <location>
        <begin position="15"/>
        <end position="17"/>
    </location>
</feature>
<feature type="strand" evidence="4">
    <location>
        <begin position="19"/>
        <end position="33"/>
    </location>
</feature>
<feature type="strand" evidence="4">
    <location>
        <begin position="36"/>
        <end position="40"/>
    </location>
</feature>
<feature type="helix" evidence="4">
    <location>
        <begin position="43"/>
        <end position="45"/>
    </location>
</feature>
<feature type="turn" evidence="4">
    <location>
        <begin position="46"/>
        <end position="48"/>
    </location>
</feature>
<feature type="strand" evidence="4">
    <location>
        <begin position="56"/>
        <end position="62"/>
    </location>
</feature>
<feature type="turn" evidence="4">
    <location>
        <begin position="65"/>
        <end position="68"/>
    </location>
</feature>
<feature type="strand" evidence="4">
    <location>
        <begin position="71"/>
        <end position="78"/>
    </location>
</feature>
<feature type="turn" evidence="4">
    <location>
        <begin position="80"/>
        <end position="84"/>
    </location>
</feature>
<feature type="strand" evidence="4">
    <location>
        <begin position="86"/>
        <end position="94"/>
    </location>
</feature>
<feature type="strand" evidence="4">
    <location>
        <begin position="96"/>
        <end position="98"/>
    </location>
</feature>
<feature type="strand" evidence="4">
    <location>
        <begin position="102"/>
        <end position="106"/>
    </location>
</feature>
<feature type="strand" evidence="4">
    <location>
        <begin position="112"/>
        <end position="117"/>
    </location>
</feature>
<feature type="strand" evidence="4">
    <location>
        <begin position="122"/>
        <end position="124"/>
    </location>
</feature>
<feature type="strand" evidence="4">
    <location>
        <begin position="127"/>
        <end position="135"/>
    </location>
</feature>
<reference key="1">
    <citation type="journal article" date="2013" name="Biochimie">
        <title>Membrane cholesterol and sphingomyelin, and ostreolysin A are obligatory for pore-formation by a MACPF/CDC-like pore-forming protein, pleurotolysin B.</title>
        <authorList>
            <person name="Ota K."/>
            <person name="Leonardi A."/>
            <person name="Mikelj M."/>
            <person name="Skocaj M."/>
            <person name="Wohlschlager T."/>
            <person name="Kunzler M."/>
            <person name="Aebi M."/>
            <person name="Narat M."/>
            <person name="Krizaj I."/>
            <person name="Anderluh G."/>
            <person name="Sepcic K."/>
            <person name="Macek P."/>
        </authorList>
    </citation>
    <scope>NUCLEOTIDE SEQUENCE [MRNA]</scope>
    <scope>FUNCTION</scope>
</reference>
<reference key="2">
    <citation type="journal article" date="2002" name="Biochim. Biophys. Acta">
        <title>Pleurotus and Agrocybe hemolysins, new proteins hypothetically involved in fungal fruiting.</title>
        <authorList>
            <person name="Berne S."/>
            <person name="Krizaj I."/>
            <person name="Pohleven F."/>
            <person name="Turk T."/>
            <person name="Macek P."/>
            <person name="Sepcic K."/>
        </authorList>
    </citation>
    <scope>PROTEIN SEQUENCE OF 2-51</scope>
    <scope>FUNCTION</scope>
    <scope>SUBUNIT</scope>
    <scope>DEVELOPMENTAL STAGE</scope>
    <source>
        <strain>Plo 5</strain>
        <tissue>Fruiting body</tissue>
    </source>
</reference>
<evidence type="ECO:0000269" key="1">
    <source>
    </source>
</evidence>
<evidence type="ECO:0000269" key="2">
    <source>
    </source>
</evidence>
<evidence type="ECO:0000305" key="3"/>
<evidence type="ECO:0007829" key="4">
    <source>
        <dbReference type="PDB" id="6MYI"/>
    </source>
</evidence>
<protein>
    <recommendedName>
        <fullName>Ostreolysin A6</fullName>
    </recommendedName>
</protein>
<organism>
    <name type="scientific">Pleurotus ostreatus</name>
    <name type="common">Oyster mushroom</name>
    <name type="synonym">White-rot fungus</name>
    <dbReference type="NCBI Taxonomy" id="5322"/>
    <lineage>
        <taxon>Eukaryota</taxon>
        <taxon>Fungi</taxon>
        <taxon>Dikarya</taxon>
        <taxon>Basidiomycota</taxon>
        <taxon>Agaricomycotina</taxon>
        <taxon>Agaricomycetes</taxon>
        <taxon>Agaricomycetidae</taxon>
        <taxon>Agaricales</taxon>
        <taxon>Pleurotineae</taxon>
        <taxon>Pleurotaceae</taxon>
        <taxon>Pleurotus</taxon>
    </lineage>
</organism>